<organism>
    <name type="scientific">Salmonella schwarzengrund (strain CVM19633)</name>
    <dbReference type="NCBI Taxonomy" id="439843"/>
    <lineage>
        <taxon>Bacteria</taxon>
        <taxon>Pseudomonadati</taxon>
        <taxon>Pseudomonadota</taxon>
        <taxon>Gammaproteobacteria</taxon>
        <taxon>Enterobacterales</taxon>
        <taxon>Enterobacteriaceae</taxon>
        <taxon>Salmonella</taxon>
    </lineage>
</organism>
<name>RISB_SALSV</name>
<sequence>MNIIKANVAAPDARVAITIARFNQFINDSLLDGAVDALTRIGQVKDDNITVVWVPGAYELPLATEALAKSGKYDAVVALGTVIRGGTAHFEYVAGGASNGLASVAQDSGVPVAFGVLTTESIEQAIERAGTKAGNKGAEAALTALEMINVLKAIKA</sequence>
<accession>B4TM97</accession>
<dbReference type="EC" id="2.5.1.78" evidence="1"/>
<dbReference type="EMBL" id="CP001127">
    <property type="protein sequence ID" value="ACF88717.1"/>
    <property type="molecule type" value="Genomic_DNA"/>
</dbReference>
<dbReference type="SMR" id="B4TM97"/>
<dbReference type="KEGG" id="sew:SeSA_A0477"/>
<dbReference type="HOGENOM" id="CLU_089358_1_1_6"/>
<dbReference type="UniPathway" id="UPA00275">
    <property type="reaction ID" value="UER00404"/>
</dbReference>
<dbReference type="Proteomes" id="UP000001865">
    <property type="component" value="Chromosome"/>
</dbReference>
<dbReference type="GO" id="GO:0005829">
    <property type="term" value="C:cytosol"/>
    <property type="evidence" value="ECO:0007669"/>
    <property type="project" value="TreeGrafter"/>
</dbReference>
<dbReference type="GO" id="GO:0009349">
    <property type="term" value="C:riboflavin synthase complex"/>
    <property type="evidence" value="ECO:0007669"/>
    <property type="project" value="InterPro"/>
</dbReference>
<dbReference type="GO" id="GO:0000906">
    <property type="term" value="F:6,7-dimethyl-8-ribityllumazine synthase activity"/>
    <property type="evidence" value="ECO:0007669"/>
    <property type="project" value="UniProtKB-UniRule"/>
</dbReference>
<dbReference type="GO" id="GO:0009231">
    <property type="term" value="P:riboflavin biosynthetic process"/>
    <property type="evidence" value="ECO:0007669"/>
    <property type="project" value="UniProtKB-UniRule"/>
</dbReference>
<dbReference type="CDD" id="cd09209">
    <property type="entry name" value="Lumazine_synthase-I"/>
    <property type="match status" value="1"/>
</dbReference>
<dbReference type="FunFam" id="3.40.50.960:FF:000001">
    <property type="entry name" value="6,7-dimethyl-8-ribityllumazine synthase"/>
    <property type="match status" value="1"/>
</dbReference>
<dbReference type="Gene3D" id="3.40.50.960">
    <property type="entry name" value="Lumazine/riboflavin synthase"/>
    <property type="match status" value="1"/>
</dbReference>
<dbReference type="HAMAP" id="MF_00178">
    <property type="entry name" value="Lumazine_synth"/>
    <property type="match status" value="1"/>
</dbReference>
<dbReference type="InterPro" id="IPR034964">
    <property type="entry name" value="LS"/>
</dbReference>
<dbReference type="InterPro" id="IPR002180">
    <property type="entry name" value="LS/RS"/>
</dbReference>
<dbReference type="InterPro" id="IPR036467">
    <property type="entry name" value="LS/RS_sf"/>
</dbReference>
<dbReference type="NCBIfam" id="TIGR00114">
    <property type="entry name" value="lumazine-synth"/>
    <property type="match status" value="1"/>
</dbReference>
<dbReference type="NCBIfam" id="NF000812">
    <property type="entry name" value="PRK00061.1-4"/>
    <property type="match status" value="1"/>
</dbReference>
<dbReference type="PANTHER" id="PTHR21058:SF0">
    <property type="entry name" value="6,7-DIMETHYL-8-RIBITYLLUMAZINE SYNTHASE"/>
    <property type="match status" value="1"/>
</dbReference>
<dbReference type="PANTHER" id="PTHR21058">
    <property type="entry name" value="6,7-DIMETHYL-8-RIBITYLLUMAZINE SYNTHASE DMRL SYNTHASE LUMAZINE SYNTHASE"/>
    <property type="match status" value="1"/>
</dbReference>
<dbReference type="Pfam" id="PF00885">
    <property type="entry name" value="DMRL_synthase"/>
    <property type="match status" value="1"/>
</dbReference>
<dbReference type="SUPFAM" id="SSF52121">
    <property type="entry name" value="Lumazine synthase"/>
    <property type="match status" value="1"/>
</dbReference>
<proteinExistence type="inferred from homology"/>
<gene>
    <name evidence="1" type="primary">ribH</name>
    <name type="ordered locus">SeSA_A0477</name>
</gene>
<evidence type="ECO:0000255" key="1">
    <source>
        <dbReference type="HAMAP-Rule" id="MF_00178"/>
    </source>
</evidence>
<reference key="1">
    <citation type="journal article" date="2011" name="J. Bacteriol.">
        <title>Comparative genomics of 28 Salmonella enterica isolates: evidence for CRISPR-mediated adaptive sublineage evolution.</title>
        <authorList>
            <person name="Fricke W.F."/>
            <person name="Mammel M.K."/>
            <person name="McDermott P.F."/>
            <person name="Tartera C."/>
            <person name="White D.G."/>
            <person name="Leclerc J.E."/>
            <person name="Ravel J."/>
            <person name="Cebula T.A."/>
        </authorList>
    </citation>
    <scope>NUCLEOTIDE SEQUENCE [LARGE SCALE GENOMIC DNA]</scope>
    <source>
        <strain>CVM19633</strain>
    </source>
</reference>
<protein>
    <recommendedName>
        <fullName evidence="1">6,7-dimethyl-8-ribityllumazine synthase</fullName>
        <shortName evidence="1">DMRL synthase</shortName>
        <shortName evidence="1">LS</shortName>
        <shortName evidence="1">Lumazine synthase</shortName>
        <ecNumber evidence="1">2.5.1.78</ecNumber>
    </recommendedName>
</protein>
<comment type="function">
    <text evidence="1">Catalyzes the formation of 6,7-dimethyl-8-ribityllumazine by condensation of 5-amino-6-(D-ribitylamino)uracil with 3,4-dihydroxy-2-butanone 4-phosphate. This is the penultimate step in the biosynthesis of riboflavin.</text>
</comment>
<comment type="catalytic activity">
    <reaction evidence="1">
        <text>(2S)-2-hydroxy-3-oxobutyl phosphate + 5-amino-6-(D-ribitylamino)uracil = 6,7-dimethyl-8-(1-D-ribityl)lumazine + phosphate + 2 H2O + H(+)</text>
        <dbReference type="Rhea" id="RHEA:26152"/>
        <dbReference type="ChEBI" id="CHEBI:15377"/>
        <dbReference type="ChEBI" id="CHEBI:15378"/>
        <dbReference type="ChEBI" id="CHEBI:15934"/>
        <dbReference type="ChEBI" id="CHEBI:43474"/>
        <dbReference type="ChEBI" id="CHEBI:58201"/>
        <dbReference type="ChEBI" id="CHEBI:58830"/>
        <dbReference type="EC" id="2.5.1.78"/>
    </reaction>
</comment>
<comment type="pathway">
    <text evidence="1">Cofactor biosynthesis; riboflavin biosynthesis; riboflavin from 2-hydroxy-3-oxobutyl phosphate and 5-amino-6-(D-ribitylamino)uracil: step 1/2.</text>
</comment>
<comment type="subunit">
    <text evidence="1">Forms an icosahedral capsid composed of 60 subunits, arranged as a dodecamer of pentamers.</text>
</comment>
<comment type="similarity">
    <text evidence="1">Belongs to the DMRL synthase family.</text>
</comment>
<keyword id="KW-0686">Riboflavin biosynthesis</keyword>
<keyword id="KW-0808">Transferase</keyword>
<feature type="chain" id="PRO_1000098228" description="6,7-dimethyl-8-ribityllumazine synthase">
    <location>
        <begin position="1"/>
        <end position="156"/>
    </location>
</feature>
<feature type="active site" description="Proton donor" evidence="1">
    <location>
        <position position="89"/>
    </location>
</feature>
<feature type="binding site" evidence="1">
    <location>
        <position position="22"/>
    </location>
    <ligand>
        <name>5-amino-6-(D-ribitylamino)uracil</name>
        <dbReference type="ChEBI" id="CHEBI:15934"/>
    </ligand>
</feature>
<feature type="binding site" evidence="1">
    <location>
        <begin position="57"/>
        <end position="59"/>
    </location>
    <ligand>
        <name>5-amino-6-(D-ribitylamino)uracil</name>
        <dbReference type="ChEBI" id="CHEBI:15934"/>
    </ligand>
</feature>
<feature type="binding site" evidence="1">
    <location>
        <begin position="81"/>
        <end position="83"/>
    </location>
    <ligand>
        <name>5-amino-6-(D-ribitylamino)uracil</name>
        <dbReference type="ChEBI" id="CHEBI:15934"/>
    </ligand>
</feature>
<feature type="binding site" evidence="1">
    <location>
        <begin position="86"/>
        <end position="87"/>
    </location>
    <ligand>
        <name>(2S)-2-hydroxy-3-oxobutyl phosphate</name>
        <dbReference type="ChEBI" id="CHEBI:58830"/>
    </ligand>
</feature>
<feature type="binding site" evidence="1">
    <location>
        <position position="114"/>
    </location>
    <ligand>
        <name>5-amino-6-(D-ribitylamino)uracil</name>
        <dbReference type="ChEBI" id="CHEBI:15934"/>
    </ligand>
</feature>
<feature type="binding site" evidence="1">
    <location>
        <position position="128"/>
    </location>
    <ligand>
        <name>(2S)-2-hydroxy-3-oxobutyl phosphate</name>
        <dbReference type="ChEBI" id="CHEBI:58830"/>
    </ligand>
</feature>